<reference key="1">
    <citation type="journal article" date="2004" name="PLoS Biol.">
        <title>Phylogenomics of the reproductive parasite Wolbachia pipientis wMel: a streamlined genome overrun by mobile genetic elements.</title>
        <authorList>
            <person name="Wu M."/>
            <person name="Sun L.V."/>
            <person name="Vamathevan J.J."/>
            <person name="Riegler M."/>
            <person name="DeBoy R.T."/>
            <person name="Brownlie J.C."/>
            <person name="McGraw E.A."/>
            <person name="Martin W."/>
            <person name="Esser C."/>
            <person name="Ahmadinejad N."/>
            <person name="Wiegand C."/>
            <person name="Madupu R."/>
            <person name="Beanan M.J."/>
            <person name="Brinkac L.M."/>
            <person name="Daugherty S.C."/>
            <person name="Durkin A.S."/>
            <person name="Kolonay J.F."/>
            <person name="Nelson W.C."/>
            <person name="Mohamoud Y."/>
            <person name="Lee P."/>
            <person name="Berry K.J."/>
            <person name="Young M.B."/>
            <person name="Utterback T.R."/>
            <person name="Weidman J.F."/>
            <person name="Nierman W.C."/>
            <person name="Paulsen I.T."/>
            <person name="Nelson K.E."/>
            <person name="Tettelin H."/>
            <person name="O'Neill S.L."/>
            <person name="Eisen J.A."/>
        </authorList>
    </citation>
    <scope>NUCLEOTIDE SEQUENCE [LARGE SCALE GENOMIC DNA]</scope>
</reference>
<accession>P61729</accession>
<gene>
    <name evidence="1" type="primary">ribH</name>
    <name type="ordered locus">WD_0238</name>
</gene>
<evidence type="ECO:0000255" key="1">
    <source>
        <dbReference type="HAMAP-Rule" id="MF_00178"/>
    </source>
</evidence>
<sequence>MSRILIVNSIYYTEIANLLLEGAIDKLKGSNASYDVVEVPGTFEIPATILFAVKSGHTNYDGYLALGCVIRGETDHYQYVCKGVIEGLNEVVMHYAIPLGMGVITADSKDKALVRADKNKKNVGGHAASTVLRMIDLHNKLK</sequence>
<feature type="chain" id="PRO_0000134832" description="6,7-dimethyl-8-ribityllumazine synthase">
    <location>
        <begin position="1"/>
        <end position="142"/>
    </location>
</feature>
<feature type="active site" description="Proton donor" evidence="1">
    <location>
        <position position="76"/>
    </location>
</feature>
<feature type="binding site" evidence="1">
    <location>
        <position position="11"/>
    </location>
    <ligand>
        <name>5-amino-6-(D-ribitylamino)uracil</name>
        <dbReference type="ChEBI" id="CHEBI:15934"/>
    </ligand>
</feature>
<feature type="binding site" evidence="1">
    <location>
        <begin position="42"/>
        <end position="44"/>
    </location>
    <ligand>
        <name>5-amino-6-(D-ribitylamino)uracil</name>
        <dbReference type="ChEBI" id="CHEBI:15934"/>
    </ligand>
</feature>
<feature type="binding site" evidence="1">
    <location>
        <begin position="68"/>
        <end position="70"/>
    </location>
    <ligand>
        <name>5-amino-6-(D-ribitylamino)uracil</name>
        <dbReference type="ChEBI" id="CHEBI:15934"/>
    </ligand>
</feature>
<feature type="binding site" evidence="1">
    <location>
        <begin position="73"/>
        <end position="74"/>
    </location>
    <ligand>
        <name>(2S)-2-hydroxy-3-oxobutyl phosphate</name>
        <dbReference type="ChEBI" id="CHEBI:58830"/>
    </ligand>
</feature>
<feature type="binding site" evidence="1">
    <location>
        <position position="101"/>
    </location>
    <ligand>
        <name>5-amino-6-(D-ribitylamino)uracil</name>
        <dbReference type="ChEBI" id="CHEBI:15934"/>
    </ligand>
</feature>
<feature type="binding site" evidence="1">
    <location>
        <position position="115"/>
    </location>
    <ligand>
        <name>(2S)-2-hydroxy-3-oxobutyl phosphate</name>
        <dbReference type="ChEBI" id="CHEBI:58830"/>
    </ligand>
</feature>
<keyword id="KW-0686">Riboflavin biosynthesis</keyword>
<keyword id="KW-0808">Transferase</keyword>
<name>RISB_WOLPM</name>
<protein>
    <recommendedName>
        <fullName evidence="1">6,7-dimethyl-8-ribityllumazine synthase</fullName>
        <shortName evidence="1">DMRL synthase</shortName>
        <shortName evidence="1">LS</shortName>
        <shortName evidence="1">Lumazine synthase</shortName>
        <ecNumber evidence="1">2.5.1.78</ecNumber>
    </recommendedName>
</protein>
<organism>
    <name type="scientific">Wolbachia pipientis wMel</name>
    <dbReference type="NCBI Taxonomy" id="163164"/>
    <lineage>
        <taxon>Bacteria</taxon>
        <taxon>Pseudomonadati</taxon>
        <taxon>Pseudomonadota</taxon>
        <taxon>Alphaproteobacteria</taxon>
        <taxon>Rickettsiales</taxon>
        <taxon>Anaplasmataceae</taxon>
        <taxon>Wolbachieae</taxon>
        <taxon>Wolbachia</taxon>
    </lineage>
</organism>
<comment type="function">
    <text evidence="1">Catalyzes the formation of 6,7-dimethyl-8-ribityllumazine by condensation of 5-amino-6-(D-ribitylamino)uracil with 3,4-dihydroxy-2-butanone 4-phosphate. This is the penultimate step in the biosynthesis of riboflavin.</text>
</comment>
<comment type="catalytic activity">
    <reaction evidence="1">
        <text>(2S)-2-hydroxy-3-oxobutyl phosphate + 5-amino-6-(D-ribitylamino)uracil = 6,7-dimethyl-8-(1-D-ribityl)lumazine + phosphate + 2 H2O + H(+)</text>
        <dbReference type="Rhea" id="RHEA:26152"/>
        <dbReference type="ChEBI" id="CHEBI:15377"/>
        <dbReference type="ChEBI" id="CHEBI:15378"/>
        <dbReference type="ChEBI" id="CHEBI:15934"/>
        <dbReference type="ChEBI" id="CHEBI:43474"/>
        <dbReference type="ChEBI" id="CHEBI:58201"/>
        <dbReference type="ChEBI" id="CHEBI:58830"/>
        <dbReference type="EC" id="2.5.1.78"/>
    </reaction>
</comment>
<comment type="pathway">
    <text evidence="1">Cofactor biosynthesis; riboflavin biosynthesis; riboflavin from 2-hydroxy-3-oxobutyl phosphate and 5-amino-6-(D-ribitylamino)uracil: step 1/2.</text>
</comment>
<comment type="similarity">
    <text evidence="1">Belongs to the DMRL synthase family.</text>
</comment>
<proteinExistence type="inferred from homology"/>
<dbReference type="EC" id="2.5.1.78" evidence="1"/>
<dbReference type="EMBL" id="AE017196">
    <property type="protein sequence ID" value="AAS13982.1"/>
    <property type="molecule type" value="Genomic_DNA"/>
</dbReference>
<dbReference type="RefSeq" id="WP_006279647.1">
    <property type="nucleotide sequence ID" value="NZ_OX384529.1"/>
</dbReference>
<dbReference type="SMR" id="P61729"/>
<dbReference type="EnsemblBacteria" id="AAS13982">
    <property type="protein sequence ID" value="AAS13982"/>
    <property type="gene ID" value="WD_0238"/>
</dbReference>
<dbReference type="KEGG" id="wol:WD_0238"/>
<dbReference type="eggNOG" id="COG0054">
    <property type="taxonomic scope" value="Bacteria"/>
</dbReference>
<dbReference type="UniPathway" id="UPA00275">
    <property type="reaction ID" value="UER00404"/>
</dbReference>
<dbReference type="Proteomes" id="UP000008215">
    <property type="component" value="Chromosome"/>
</dbReference>
<dbReference type="GO" id="GO:0005829">
    <property type="term" value="C:cytosol"/>
    <property type="evidence" value="ECO:0007669"/>
    <property type="project" value="TreeGrafter"/>
</dbReference>
<dbReference type="GO" id="GO:0009349">
    <property type="term" value="C:riboflavin synthase complex"/>
    <property type="evidence" value="ECO:0007669"/>
    <property type="project" value="InterPro"/>
</dbReference>
<dbReference type="GO" id="GO:0000906">
    <property type="term" value="F:6,7-dimethyl-8-ribityllumazine synthase activity"/>
    <property type="evidence" value="ECO:0007669"/>
    <property type="project" value="UniProtKB-UniRule"/>
</dbReference>
<dbReference type="GO" id="GO:0009231">
    <property type="term" value="P:riboflavin biosynthetic process"/>
    <property type="evidence" value="ECO:0007669"/>
    <property type="project" value="UniProtKB-UniRule"/>
</dbReference>
<dbReference type="CDD" id="cd09209">
    <property type="entry name" value="Lumazine_synthase-I"/>
    <property type="match status" value="1"/>
</dbReference>
<dbReference type="Gene3D" id="3.40.50.960">
    <property type="entry name" value="Lumazine/riboflavin synthase"/>
    <property type="match status" value="1"/>
</dbReference>
<dbReference type="HAMAP" id="MF_00178">
    <property type="entry name" value="Lumazine_synth"/>
    <property type="match status" value="1"/>
</dbReference>
<dbReference type="InterPro" id="IPR034964">
    <property type="entry name" value="LS"/>
</dbReference>
<dbReference type="InterPro" id="IPR002180">
    <property type="entry name" value="LS/RS"/>
</dbReference>
<dbReference type="InterPro" id="IPR036467">
    <property type="entry name" value="LS/RS_sf"/>
</dbReference>
<dbReference type="NCBIfam" id="TIGR00114">
    <property type="entry name" value="lumazine-synth"/>
    <property type="match status" value="1"/>
</dbReference>
<dbReference type="NCBIfam" id="NF000814">
    <property type="entry name" value="PRK00061.2-2"/>
    <property type="match status" value="1"/>
</dbReference>
<dbReference type="PANTHER" id="PTHR21058:SF0">
    <property type="entry name" value="6,7-DIMETHYL-8-RIBITYLLUMAZINE SYNTHASE"/>
    <property type="match status" value="1"/>
</dbReference>
<dbReference type="PANTHER" id="PTHR21058">
    <property type="entry name" value="6,7-DIMETHYL-8-RIBITYLLUMAZINE SYNTHASE DMRL SYNTHASE LUMAZINE SYNTHASE"/>
    <property type="match status" value="1"/>
</dbReference>
<dbReference type="Pfam" id="PF00885">
    <property type="entry name" value="DMRL_synthase"/>
    <property type="match status" value="1"/>
</dbReference>
<dbReference type="SUPFAM" id="SSF52121">
    <property type="entry name" value="Lumazine synthase"/>
    <property type="match status" value="1"/>
</dbReference>